<dbReference type="EMBL" id="CP000879">
    <property type="protein sequence ID" value="ABX31504.1"/>
    <property type="molecule type" value="Genomic_DNA"/>
</dbReference>
<dbReference type="RefSeq" id="WP_012208607.1">
    <property type="nucleotide sequence ID" value="NC_010003.1"/>
</dbReference>
<dbReference type="SMR" id="A9BH95"/>
<dbReference type="STRING" id="403833.Pmob_0780"/>
<dbReference type="KEGG" id="pmo:Pmob_0780"/>
<dbReference type="eggNOG" id="COG0093">
    <property type="taxonomic scope" value="Bacteria"/>
</dbReference>
<dbReference type="HOGENOM" id="CLU_095071_2_1_0"/>
<dbReference type="OrthoDB" id="9806379at2"/>
<dbReference type="Proteomes" id="UP000000789">
    <property type="component" value="Chromosome"/>
</dbReference>
<dbReference type="GO" id="GO:0022625">
    <property type="term" value="C:cytosolic large ribosomal subunit"/>
    <property type="evidence" value="ECO:0007669"/>
    <property type="project" value="TreeGrafter"/>
</dbReference>
<dbReference type="GO" id="GO:0070180">
    <property type="term" value="F:large ribosomal subunit rRNA binding"/>
    <property type="evidence" value="ECO:0007669"/>
    <property type="project" value="TreeGrafter"/>
</dbReference>
<dbReference type="GO" id="GO:0003735">
    <property type="term" value="F:structural constituent of ribosome"/>
    <property type="evidence" value="ECO:0007669"/>
    <property type="project" value="InterPro"/>
</dbReference>
<dbReference type="GO" id="GO:0006412">
    <property type="term" value="P:translation"/>
    <property type="evidence" value="ECO:0007669"/>
    <property type="project" value="UniProtKB-UniRule"/>
</dbReference>
<dbReference type="CDD" id="cd00337">
    <property type="entry name" value="Ribosomal_uL14"/>
    <property type="match status" value="1"/>
</dbReference>
<dbReference type="Gene3D" id="2.40.150.20">
    <property type="entry name" value="Ribosomal protein L14"/>
    <property type="match status" value="1"/>
</dbReference>
<dbReference type="HAMAP" id="MF_01367">
    <property type="entry name" value="Ribosomal_uL14"/>
    <property type="match status" value="1"/>
</dbReference>
<dbReference type="InterPro" id="IPR000218">
    <property type="entry name" value="Ribosomal_uL14"/>
</dbReference>
<dbReference type="InterPro" id="IPR005745">
    <property type="entry name" value="Ribosomal_uL14_bac-type"/>
</dbReference>
<dbReference type="InterPro" id="IPR019972">
    <property type="entry name" value="Ribosomal_uL14_CS"/>
</dbReference>
<dbReference type="InterPro" id="IPR036853">
    <property type="entry name" value="Ribosomal_uL14_sf"/>
</dbReference>
<dbReference type="NCBIfam" id="TIGR01067">
    <property type="entry name" value="rplN_bact"/>
    <property type="match status" value="1"/>
</dbReference>
<dbReference type="PANTHER" id="PTHR11761">
    <property type="entry name" value="50S/60S RIBOSOMAL PROTEIN L14/L23"/>
    <property type="match status" value="1"/>
</dbReference>
<dbReference type="PANTHER" id="PTHR11761:SF3">
    <property type="entry name" value="LARGE RIBOSOMAL SUBUNIT PROTEIN UL14M"/>
    <property type="match status" value="1"/>
</dbReference>
<dbReference type="Pfam" id="PF00238">
    <property type="entry name" value="Ribosomal_L14"/>
    <property type="match status" value="1"/>
</dbReference>
<dbReference type="SMART" id="SM01374">
    <property type="entry name" value="Ribosomal_L14"/>
    <property type="match status" value="1"/>
</dbReference>
<dbReference type="SUPFAM" id="SSF50193">
    <property type="entry name" value="Ribosomal protein L14"/>
    <property type="match status" value="1"/>
</dbReference>
<dbReference type="PROSITE" id="PS00049">
    <property type="entry name" value="RIBOSOMAL_L14"/>
    <property type="match status" value="1"/>
</dbReference>
<name>RL14_PETMO</name>
<accession>A9BH95</accession>
<proteinExistence type="inferred from homology"/>
<organism>
    <name type="scientific">Petrotoga mobilis (strain DSM 10674 / SJ95)</name>
    <dbReference type="NCBI Taxonomy" id="403833"/>
    <lineage>
        <taxon>Bacteria</taxon>
        <taxon>Thermotogati</taxon>
        <taxon>Thermotogota</taxon>
        <taxon>Thermotogae</taxon>
        <taxon>Petrotogales</taxon>
        <taxon>Petrotogaceae</taxon>
        <taxon>Petrotoga</taxon>
    </lineage>
</organism>
<evidence type="ECO:0000255" key="1">
    <source>
        <dbReference type="HAMAP-Rule" id="MF_01367"/>
    </source>
</evidence>
<evidence type="ECO:0000305" key="2"/>
<keyword id="KW-0687">Ribonucleoprotein</keyword>
<keyword id="KW-0689">Ribosomal protein</keyword>
<keyword id="KW-0694">RNA-binding</keyword>
<keyword id="KW-0699">rRNA-binding</keyword>
<protein>
    <recommendedName>
        <fullName evidence="1">Large ribosomal subunit protein uL14</fullName>
    </recommendedName>
    <alternativeName>
        <fullName evidence="2">50S ribosomal protein L14</fullName>
    </alternativeName>
</protein>
<comment type="function">
    <text evidence="1">Binds to 23S rRNA. Forms part of two intersubunit bridges in the 70S ribosome.</text>
</comment>
<comment type="subunit">
    <text evidence="1">Part of the 50S ribosomal subunit. Forms a cluster with proteins L3 and L19. In the 70S ribosome, L14 and L19 interact and together make contacts with the 16S rRNA in bridges B5 and B8.</text>
</comment>
<comment type="similarity">
    <text evidence="1">Belongs to the universal ribosomal protein uL14 family.</text>
</comment>
<gene>
    <name evidence="1" type="primary">rplN</name>
    <name type="ordered locus">Pmob_0780</name>
</gene>
<reference key="1">
    <citation type="submission" date="2007-11" db="EMBL/GenBank/DDBJ databases">
        <title>Complete sequence of Petroga mobilis SJ95.</title>
        <authorList>
            <consortium name="US DOE Joint Genome Institute"/>
            <person name="Copeland A."/>
            <person name="Lucas S."/>
            <person name="Lapidus A."/>
            <person name="Barry K."/>
            <person name="Glavina del Rio T."/>
            <person name="Dalin E."/>
            <person name="Tice H."/>
            <person name="Pitluck S."/>
            <person name="Meincke L."/>
            <person name="Brettin T."/>
            <person name="Bruce D."/>
            <person name="Detter J.C."/>
            <person name="Han C."/>
            <person name="Kuske C.R."/>
            <person name="Schmutz J."/>
            <person name="Larimer F."/>
            <person name="Land M."/>
            <person name="Hauser L."/>
            <person name="Kyrpides N."/>
            <person name="Mikhailova N."/>
            <person name="Noll K."/>
            <person name="Richardson P."/>
        </authorList>
    </citation>
    <scope>NUCLEOTIDE SEQUENCE [LARGE SCALE GENOMIC DNA]</scope>
    <source>
        <strain>DSM 10674 / SJ95</strain>
    </source>
</reference>
<sequence length="122" mass="13482">MVQLESKIRVADNSGAKVLRVIKVLGGFHKSKGTVGDTVVCSVREAIPHTDLKKGQVVQAVIVRTKKEIRRKDGTYIRFDDNAAVLIDKNKLPLGTRVFGPVAREVREKGYAKIASLAKEVW</sequence>
<feature type="chain" id="PRO_0000355832" description="Large ribosomal subunit protein uL14">
    <location>
        <begin position="1"/>
        <end position="122"/>
    </location>
</feature>